<keyword id="KW-0413">Isomerase</keyword>
<keyword id="KW-0819">tRNA processing</keyword>
<feature type="chain" id="PRO_1000084689" description="tRNA pseudouridine synthase B">
    <location>
        <begin position="1"/>
        <end position="305"/>
    </location>
</feature>
<feature type="active site" description="Nucleophile" evidence="1">
    <location>
        <position position="39"/>
    </location>
</feature>
<gene>
    <name evidence="1" type="primary">truB</name>
    <name type="ordered locus">SaurJH1_1357</name>
</gene>
<protein>
    <recommendedName>
        <fullName evidence="1">tRNA pseudouridine synthase B</fullName>
        <ecNumber evidence="1">5.4.99.25</ecNumber>
    </recommendedName>
    <alternativeName>
        <fullName evidence="1">tRNA pseudouridine(55) synthase</fullName>
        <shortName evidence="1">Psi55 synthase</shortName>
    </alternativeName>
    <alternativeName>
        <fullName evidence="1">tRNA pseudouridylate synthase</fullName>
    </alternativeName>
    <alternativeName>
        <fullName evidence="1">tRNA-uridine isomerase</fullName>
    </alternativeName>
</protein>
<comment type="function">
    <text evidence="1">Responsible for synthesis of pseudouridine from uracil-55 in the psi GC loop of transfer RNAs.</text>
</comment>
<comment type="catalytic activity">
    <reaction evidence="1">
        <text>uridine(55) in tRNA = pseudouridine(55) in tRNA</text>
        <dbReference type="Rhea" id="RHEA:42532"/>
        <dbReference type="Rhea" id="RHEA-COMP:10101"/>
        <dbReference type="Rhea" id="RHEA-COMP:10102"/>
        <dbReference type="ChEBI" id="CHEBI:65314"/>
        <dbReference type="ChEBI" id="CHEBI:65315"/>
        <dbReference type="EC" id="5.4.99.25"/>
    </reaction>
</comment>
<comment type="similarity">
    <text evidence="1">Belongs to the pseudouridine synthase TruB family. Type 1 subfamily.</text>
</comment>
<evidence type="ECO:0000255" key="1">
    <source>
        <dbReference type="HAMAP-Rule" id="MF_01080"/>
    </source>
</evidence>
<organism>
    <name type="scientific">Staphylococcus aureus (strain JH1)</name>
    <dbReference type="NCBI Taxonomy" id="359787"/>
    <lineage>
        <taxon>Bacteria</taxon>
        <taxon>Bacillati</taxon>
        <taxon>Bacillota</taxon>
        <taxon>Bacilli</taxon>
        <taxon>Bacillales</taxon>
        <taxon>Staphylococcaceae</taxon>
        <taxon>Staphylococcus</taxon>
    </lineage>
</organism>
<reference key="1">
    <citation type="submission" date="2007-06" db="EMBL/GenBank/DDBJ databases">
        <title>Complete sequence of chromosome of Staphylococcus aureus subsp. aureus JH1.</title>
        <authorList>
            <consortium name="US DOE Joint Genome Institute"/>
            <person name="Copeland A."/>
            <person name="Lucas S."/>
            <person name="Lapidus A."/>
            <person name="Barry K."/>
            <person name="Detter J.C."/>
            <person name="Glavina del Rio T."/>
            <person name="Hammon N."/>
            <person name="Israni S."/>
            <person name="Dalin E."/>
            <person name="Tice H."/>
            <person name="Pitluck S."/>
            <person name="Chain P."/>
            <person name="Malfatti S."/>
            <person name="Shin M."/>
            <person name="Vergez L."/>
            <person name="Schmutz J."/>
            <person name="Larimer F."/>
            <person name="Land M."/>
            <person name="Hauser L."/>
            <person name="Kyrpides N."/>
            <person name="Ivanova N."/>
            <person name="Tomasz A."/>
            <person name="Richardson P."/>
        </authorList>
    </citation>
    <scope>NUCLEOTIDE SEQUENCE [LARGE SCALE GENOMIC DNA]</scope>
    <source>
        <strain>JH1</strain>
    </source>
</reference>
<sequence>MYNGILPVYKERGLTSHDVVFKLRKILKTKKIGHTGTLDPEVAGVLPVCIGNATRVSDYVMDMGKAYEATVSIGRSTTTEDQTGDTLETKGVHSADFNKDDIDRLLENFKGVIEQIPPMYSSVKVNGKKLYEYARNNETVERPKRKVNIKDIGRISELDFKENECHFKIRVICGKGTYIRTLATDIGVKLGFPAHMSKLTRIESGGFVLKDSLTLEQIKELHEQDSLQNKLFPLEYGLKGLPSIKIKDSHIKKRILNGQKFNKNEFDNKIKDQIVFIDDDSEKVLAIYMVHPTKESEIKPKKVFN</sequence>
<proteinExistence type="inferred from homology"/>
<dbReference type="EC" id="5.4.99.25" evidence="1"/>
<dbReference type="EMBL" id="CP000736">
    <property type="protein sequence ID" value="ABR52208.1"/>
    <property type="molecule type" value="Genomic_DNA"/>
</dbReference>
<dbReference type="SMR" id="A6U190"/>
<dbReference type="KEGG" id="sah:SaurJH1_1357"/>
<dbReference type="HOGENOM" id="CLU_032087_0_1_9"/>
<dbReference type="GO" id="GO:0003723">
    <property type="term" value="F:RNA binding"/>
    <property type="evidence" value="ECO:0007669"/>
    <property type="project" value="InterPro"/>
</dbReference>
<dbReference type="GO" id="GO:0160148">
    <property type="term" value="F:tRNA pseudouridine(55) synthase activity"/>
    <property type="evidence" value="ECO:0007669"/>
    <property type="project" value="UniProtKB-EC"/>
</dbReference>
<dbReference type="GO" id="GO:1990481">
    <property type="term" value="P:mRNA pseudouridine synthesis"/>
    <property type="evidence" value="ECO:0007669"/>
    <property type="project" value="TreeGrafter"/>
</dbReference>
<dbReference type="GO" id="GO:0031119">
    <property type="term" value="P:tRNA pseudouridine synthesis"/>
    <property type="evidence" value="ECO:0007669"/>
    <property type="project" value="UniProtKB-UniRule"/>
</dbReference>
<dbReference type="CDD" id="cd02573">
    <property type="entry name" value="PseudoU_synth_EcTruB"/>
    <property type="match status" value="1"/>
</dbReference>
<dbReference type="FunFam" id="3.30.2350.10:FF:000011">
    <property type="entry name" value="tRNA pseudouridine synthase B"/>
    <property type="match status" value="1"/>
</dbReference>
<dbReference type="Gene3D" id="3.30.2350.10">
    <property type="entry name" value="Pseudouridine synthase"/>
    <property type="match status" value="1"/>
</dbReference>
<dbReference type="HAMAP" id="MF_01080">
    <property type="entry name" value="TruB_bact"/>
    <property type="match status" value="1"/>
</dbReference>
<dbReference type="InterPro" id="IPR020103">
    <property type="entry name" value="PsdUridine_synth_cat_dom_sf"/>
</dbReference>
<dbReference type="InterPro" id="IPR002501">
    <property type="entry name" value="PsdUridine_synth_N"/>
</dbReference>
<dbReference type="InterPro" id="IPR014780">
    <property type="entry name" value="tRNA_psdUridine_synth_TruB"/>
</dbReference>
<dbReference type="InterPro" id="IPR032819">
    <property type="entry name" value="TruB_C"/>
</dbReference>
<dbReference type="NCBIfam" id="TIGR00431">
    <property type="entry name" value="TruB"/>
    <property type="match status" value="1"/>
</dbReference>
<dbReference type="PANTHER" id="PTHR13767:SF2">
    <property type="entry name" value="PSEUDOURIDYLATE SYNTHASE TRUB1"/>
    <property type="match status" value="1"/>
</dbReference>
<dbReference type="PANTHER" id="PTHR13767">
    <property type="entry name" value="TRNA-PSEUDOURIDINE SYNTHASE"/>
    <property type="match status" value="1"/>
</dbReference>
<dbReference type="Pfam" id="PF16198">
    <property type="entry name" value="TruB_C_2"/>
    <property type="match status" value="1"/>
</dbReference>
<dbReference type="Pfam" id="PF01509">
    <property type="entry name" value="TruB_N"/>
    <property type="match status" value="1"/>
</dbReference>
<dbReference type="SUPFAM" id="SSF55120">
    <property type="entry name" value="Pseudouridine synthase"/>
    <property type="match status" value="1"/>
</dbReference>
<accession>A6U190</accession>
<name>TRUB_STAA2</name>